<sequence length="780" mass="85203">MTHEEHHAARTLGVGKAIAVLTSGGDAQGMNAAVRAVVRVGIFTGARVFFVHEGYQGLVDGGDHIREATWESVSMMLQLGGTVIGSARCKDFREREGRLRAAHNLVKRGITNLCVIGGDGSLTGADTFRSEWSDLLSDLQKAGKITAEEATRSSYLNIVGLVGSIDNDFCGTDMTIGTDSALHRITEIVDAITTTAQSHQRTFVLEVMGRHCGYLALVTSLSCGADWVFIPECPPDDNWEDHLCRRLSETRTRGSRLNIIIVAEGAIDRNGKPITSEGVKDLVVRRLGYDTRVTVLGHVQRGGTPSAFDRILGSRMGVEAVMALLEGTPDTPACVVSLSGNQAVRLPLMECVQVTKDVTKAMDEKRFDEAMKLRGRSFMNNWEVYKLLAHIRPPAPKSGSYTVAVMNVGAPAAGMNAAVRSTVRIGLIQGNRVLVVHDGFEGPAKGQIEEAGWSYVGGWTGQGGSKLGSKRTLPKKSFEQISANITKFNIQGLVIIGGFEAYTGGLELMEGRKQFDELCIPFVVIPATVSNNVPGSDFSVGADTALNTICTTCDRIKQSAAGTKRRVFIIETMGGYCGYLATMAGLAAGADAAYIFEEPFTIRDLQANVEHLVQKMKTTVKRGLVLRNEKCNENYTTDFIFNLYSEEGKGIFDSRKNVLGHMQQGGSPTPFDRNFATKMGAKAMNWMAGKIKESYRNGRIFANTPDSGCVLGMRKRALVFQPVTELQNQTDFEHRIPKEQWWLKLRPILKILAKYEIDLDTSEHAHLEHISRKRSGEATV</sequence>
<reference key="1">
    <citation type="journal article" date="1987" name="J. Biol. Chem.">
        <title>The rabbit muscle phosphofructokinase gene. Implications for protein structure, function, and tissue specificity.</title>
        <authorList>
            <person name="Lee C.P."/>
            <person name="Kao M.C."/>
            <person name="French B.A."/>
            <person name="Putney S.D."/>
            <person name="Chang S.H."/>
        </authorList>
    </citation>
    <scope>NUCLEOTIDE SEQUENCE [GENOMIC DNA]</scope>
    <source>
        <tissue>Muscle</tissue>
    </source>
</reference>
<reference key="2">
    <citation type="journal article" date="1984" name="Nature">
        <title>Evolution of phosphofructokinase -- gene duplication and creation of new effector sites.</title>
        <authorList>
            <person name="Poorman R.A."/>
            <person name="Randolph A."/>
            <person name="Kemp R.G."/>
            <person name="Heinrikson R.L."/>
        </authorList>
    </citation>
    <scope>PROTEIN SEQUENCE OF 2-780</scope>
    <scope>ACETYLATION AT THR-2</scope>
</reference>
<reference key="3">
    <citation type="journal article" date="1989" name="Biochim. Biophys. Acta">
        <title>The sites of phosphorylation of rabbit brain phosphofructo-1-kinase by cyclic AMP-dependent protein kinase.</title>
        <authorList>
            <person name="Valaitis A.P."/>
            <person name="Foe L.G."/>
            <person name="Kwiatkowska D."/>
            <person name="Latshaw S.P."/>
            <person name="Kemp R.G."/>
        </authorList>
    </citation>
    <scope>PROTEIN SEQUENCE OF 768-780</scope>
    <scope>PHOSPHORYLATION AT SER-775</scope>
</reference>
<reference key="4">
    <citation type="journal article" date="2011" name="J. Mol. Biol.">
        <title>The crystal structures of eukaryotic phosphofructokinases from baker's yeast and rabbit skeletal muscle.</title>
        <authorList>
            <person name="Banaszak K."/>
            <person name="Mechin I."/>
            <person name="Obmolova G."/>
            <person name="Oldham M."/>
            <person name="Chang S.H."/>
            <person name="Ruiz T."/>
            <person name="Radermacher M."/>
            <person name="Kopperschlager G."/>
            <person name="Rypniewski W."/>
        </authorList>
    </citation>
    <scope>X-RAY CRYSTALLOGRAPHY (2.9 ANGSTROMS) OF 194-959</scope>
</reference>
<comment type="function">
    <text evidence="5">Catalyzes the phosphorylation of D-fructose 6-phosphate to fructose 1,6-bisphosphate by ATP, the first committing step of glycolysis.</text>
</comment>
<comment type="catalytic activity">
    <reaction evidence="5">
        <text>beta-D-fructose 6-phosphate + ATP = beta-D-fructose 1,6-bisphosphate + ADP + H(+)</text>
        <dbReference type="Rhea" id="RHEA:16109"/>
        <dbReference type="ChEBI" id="CHEBI:15378"/>
        <dbReference type="ChEBI" id="CHEBI:30616"/>
        <dbReference type="ChEBI" id="CHEBI:32966"/>
        <dbReference type="ChEBI" id="CHEBI:57634"/>
        <dbReference type="ChEBI" id="CHEBI:456216"/>
        <dbReference type="EC" id="2.7.1.11"/>
    </reaction>
</comment>
<comment type="cofactor">
    <cofactor>
        <name>Mg(2+)</name>
        <dbReference type="ChEBI" id="CHEBI:18420"/>
    </cofactor>
</comment>
<comment type="activity regulation">
    <text evidence="5">Allosterically activated by ADP, AMP, or fructose 2,6-bisphosphate, and allosterically inhibited by ATP or citrate.</text>
</comment>
<comment type="pathway">
    <text evidence="5">Carbohydrate degradation; glycolysis; D-glyceraldehyde 3-phosphate and glycerone phosphate from D-glucose: step 3/4.</text>
</comment>
<comment type="subunit">
    <text evidence="3 5 8">Homo- and heterotetramers (By similarity). Phosphofructokinase (PFK) enzyme functions as a tetramer composed of different combinations of 3 types of subunits, called PFKM (M), PFKL (L) and PFKP (P). The composition of the PFK tetramer differs according to the tissue type it is present in. The kinetic and regulatory properties of the tetrameric enzyme are dependent on the subunit composition, hence can vary across tissues (Probable). Interacts (via C-terminus) with HK1 (via N-terminal spermatogenic cell-specific region) (By similarity).</text>
</comment>
<comment type="subcellular location">
    <subcellularLocation>
        <location evidence="5">Cytoplasm</location>
    </subcellularLocation>
</comment>
<comment type="PTM">
    <text evidence="1">GlcNAcylation decreases enzyme activity.</text>
</comment>
<comment type="similarity">
    <text evidence="5">Belongs to the phosphofructokinase type A (PFKA) family. ATP-dependent PFK group I subfamily. Eukaryotic two domain clade 'E' sub-subfamily.</text>
</comment>
<keyword id="KW-0002">3D-structure</keyword>
<keyword id="KW-0007">Acetylation</keyword>
<keyword id="KW-0021">Allosteric enzyme</keyword>
<keyword id="KW-0067">ATP-binding</keyword>
<keyword id="KW-0963">Cytoplasm</keyword>
<keyword id="KW-0903">Direct protein sequencing</keyword>
<keyword id="KW-0324">Glycolysis</keyword>
<keyword id="KW-0325">Glycoprotein</keyword>
<keyword id="KW-0379">Hydroxylation</keyword>
<keyword id="KW-0418">Kinase</keyword>
<keyword id="KW-0460">Magnesium</keyword>
<keyword id="KW-0479">Metal-binding</keyword>
<keyword id="KW-0547">Nucleotide-binding</keyword>
<keyword id="KW-0597">Phosphoprotein</keyword>
<keyword id="KW-1185">Reference proteome</keyword>
<keyword id="KW-0808">Transferase</keyword>
<feature type="initiator methionine" description="Removed" evidence="7">
    <location>
        <position position="1"/>
    </location>
</feature>
<feature type="chain" id="PRO_0000112019" description="ATP-dependent 6-phosphofructokinase, muscle type">
    <location>
        <begin position="2"/>
        <end position="780"/>
    </location>
</feature>
<feature type="region of interest" description="N-terminal catalytic PFK domain 1" evidence="5 9">
    <location>
        <begin position="2"/>
        <end position="390"/>
    </location>
</feature>
<feature type="region of interest" description="Interdomain linker" evidence="5 9">
    <location>
        <begin position="391"/>
        <end position="401"/>
    </location>
</feature>
<feature type="region of interest" description="C-terminal regulatory PFK domain 2" evidence="5 9">
    <location>
        <begin position="402"/>
        <end position="780"/>
    </location>
</feature>
<feature type="active site" description="Proton acceptor" evidence="5">
    <location>
        <position position="166"/>
    </location>
</feature>
<feature type="binding site" evidence="5">
    <location>
        <position position="25"/>
    </location>
    <ligand>
        <name>ATP</name>
        <dbReference type="ChEBI" id="CHEBI:30616"/>
    </ligand>
</feature>
<feature type="binding site" evidence="5">
    <location>
        <begin position="88"/>
        <end position="89"/>
    </location>
    <ligand>
        <name>ATP</name>
        <dbReference type="ChEBI" id="CHEBI:30616"/>
    </ligand>
</feature>
<feature type="binding site" evidence="5">
    <location>
        <begin position="118"/>
        <end position="121"/>
    </location>
    <ligand>
        <name>ATP</name>
        <dbReference type="ChEBI" id="CHEBI:30616"/>
    </ligand>
</feature>
<feature type="binding site" evidence="5">
    <location>
        <position position="119"/>
    </location>
    <ligand>
        <name>Mg(2+)</name>
        <dbReference type="ChEBI" id="CHEBI:18420"/>
        <note>catalytic</note>
    </ligand>
</feature>
<feature type="binding site" description="in other chain" evidence="5">
    <location>
        <begin position="164"/>
        <end position="166"/>
    </location>
    <ligand>
        <name>substrate</name>
        <note>ligand shared between dimeric partners</note>
    </ligand>
</feature>
<feature type="binding site" evidence="5">
    <location>
        <position position="201"/>
    </location>
    <ligand>
        <name>substrate</name>
        <note>ligand shared between dimeric partners</note>
    </ligand>
</feature>
<feature type="binding site" description="in other chain" evidence="5">
    <location>
        <begin position="208"/>
        <end position="210"/>
    </location>
    <ligand>
        <name>substrate</name>
        <note>ligand shared between dimeric partners</note>
    </ligand>
</feature>
<feature type="binding site" description="in other chain" evidence="5">
    <location>
        <position position="264"/>
    </location>
    <ligand>
        <name>substrate</name>
        <note>ligand shared between dimeric partners</note>
    </ligand>
</feature>
<feature type="binding site" evidence="5">
    <location>
        <position position="292"/>
    </location>
    <ligand>
        <name>substrate</name>
        <note>ligand shared between dimeric partners</note>
    </ligand>
</feature>
<feature type="binding site" description="in other chain" evidence="5">
    <location>
        <begin position="298"/>
        <end position="301"/>
    </location>
    <ligand>
        <name>substrate</name>
        <note>ligand shared between dimeric partners</note>
    </ligand>
</feature>
<feature type="binding site" description="in other chain" evidence="5">
    <location>
        <position position="471"/>
    </location>
    <ligand>
        <name>beta-D-fructose 2,6-bisphosphate</name>
        <dbReference type="ChEBI" id="CHEBI:58579"/>
        <note>allosteric activator; ligand shared between dimeric partners</note>
    </ligand>
</feature>
<feature type="binding site" description="in other chain" evidence="5">
    <location>
        <begin position="528"/>
        <end position="532"/>
    </location>
    <ligand>
        <name>beta-D-fructose 2,6-bisphosphate</name>
        <dbReference type="ChEBI" id="CHEBI:58579"/>
        <note>allosteric activator; ligand shared between dimeric partners</note>
    </ligand>
</feature>
<feature type="binding site" evidence="5">
    <location>
        <position position="566"/>
    </location>
    <ligand>
        <name>beta-D-fructose 2,6-bisphosphate</name>
        <dbReference type="ChEBI" id="CHEBI:58579"/>
        <note>allosteric activator; ligand shared between dimeric partners</note>
    </ligand>
</feature>
<feature type="binding site" description="in other chain" evidence="5">
    <location>
        <begin position="573"/>
        <end position="575"/>
    </location>
    <ligand>
        <name>beta-D-fructose 2,6-bisphosphate</name>
        <dbReference type="ChEBI" id="CHEBI:58579"/>
        <note>allosteric activator; ligand shared between dimeric partners</note>
    </ligand>
</feature>
<feature type="binding site" description="in other chain" evidence="5">
    <location>
        <position position="629"/>
    </location>
    <ligand>
        <name>beta-D-fructose 2,6-bisphosphate</name>
        <dbReference type="ChEBI" id="CHEBI:58579"/>
        <note>allosteric activator; ligand shared between dimeric partners</note>
    </ligand>
</feature>
<feature type="binding site" evidence="5">
    <location>
        <position position="655"/>
    </location>
    <ligand>
        <name>beta-D-fructose 2,6-bisphosphate</name>
        <dbReference type="ChEBI" id="CHEBI:58579"/>
        <note>allosteric activator; ligand shared between dimeric partners</note>
    </ligand>
</feature>
<feature type="binding site" description="in other chain" evidence="5">
    <location>
        <begin position="661"/>
        <end position="664"/>
    </location>
    <ligand>
        <name>beta-D-fructose 2,6-bisphosphate</name>
        <dbReference type="ChEBI" id="CHEBI:58579"/>
        <note>allosteric activator; ligand shared between dimeric partners</note>
    </ligand>
</feature>
<feature type="binding site" description="in other chain" evidence="5">
    <location>
        <position position="735"/>
    </location>
    <ligand>
        <name>beta-D-fructose 2,6-bisphosphate</name>
        <dbReference type="ChEBI" id="CHEBI:58579"/>
        <note>allosteric activator; ligand shared between dimeric partners</note>
    </ligand>
</feature>
<feature type="modified residue" description="N-acetylthreonine" evidence="7">
    <location>
        <position position="2"/>
    </location>
</feature>
<feature type="modified residue" description="Phosphoserine" evidence="4">
    <location>
        <position position="133"/>
    </location>
</feature>
<feature type="modified residue" description="Phosphoserine" evidence="3">
    <location>
        <position position="377"/>
    </location>
</feature>
<feature type="modified residue" description="N6-(2-hydroxyisobutyryl)lysine" evidence="2">
    <location>
        <position position="557"/>
    </location>
</feature>
<feature type="modified residue" description="Phosphoserine" evidence="2">
    <location>
        <position position="667"/>
    </location>
</feature>
<feature type="modified residue" description="Phosphoserine; by PKA" evidence="6">
    <location>
        <position position="775"/>
    </location>
</feature>
<feature type="glycosylation site" description="O-linked (GlcNAc) serine" evidence="1">
    <location>
        <position position="530"/>
    </location>
</feature>
<feature type="sequence conflict" description="In Ref. 2; AA sequence." evidence="8" ref="2">
    <original>R</original>
    <variation>S</variation>
    <location>
        <position position="269"/>
    </location>
</feature>
<feature type="sequence conflict" description="In Ref. 2; AA sequence." evidence="8" ref="2">
    <location>
        <begin position="480"/>
        <end position="508"/>
    </location>
</feature>
<feature type="sequence conflict" description="In Ref. 2; AA sequence." evidence="8" ref="2">
    <original>S</original>
    <variation>I</variation>
    <location>
        <position position="559"/>
    </location>
</feature>
<feature type="sequence conflict" description="In Ref. 2; AA sequence." evidence="8" ref="2">
    <location>
        <position position="566"/>
    </location>
</feature>
<feature type="turn" evidence="10">
    <location>
        <begin position="10"/>
        <end position="13"/>
    </location>
</feature>
<feature type="strand" evidence="10">
    <location>
        <begin position="17"/>
        <end position="21"/>
    </location>
</feature>
<feature type="helix" evidence="10">
    <location>
        <begin position="30"/>
        <end position="43"/>
    </location>
</feature>
<feature type="strand" evidence="10">
    <location>
        <begin position="47"/>
        <end position="49"/>
    </location>
</feature>
<feature type="helix" evidence="10">
    <location>
        <begin position="54"/>
        <end position="59"/>
    </location>
</feature>
<feature type="helix" evidence="10">
    <location>
        <begin position="62"/>
        <end position="64"/>
    </location>
</feature>
<feature type="helix" evidence="10">
    <location>
        <begin position="71"/>
        <end position="73"/>
    </location>
</feature>
<feature type="helix" evidence="10">
    <location>
        <begin position="91"/>
        <end position="93"/>
    </location>
</feature>
<feature type="helix" evidence="10">
    <location>
        <begin position="95"/>
        <end position="108"/>
    </location>
</feature>
<feature type="strand" evidence="10">
    <location>
        <begin position="112"/>
        <end position="117"/>
    </location>
</feature>
<feature type="helix" evidence="10">
    <location>
        <begin position="119"/>
        <end position="130"/>
    </location>
</feature>
<feature type="helix" evidence="10">
    <location>
        <begin position="133"/>
        <end position="138"/>
    </location>
</feature>
<feature type="turn" evidence="10">
    <location>
        <begin position="139"/>
        <end position="143"/>
    </location>
</feature>
<feature type="turn" evidence="10">
    <location>
        <begin position="146"/>
        <end position="148"/>
    </location>
</feature>
<feature type="helix" evidence="10">
    <location>
        <begin position="149"/>
        <end position="151"/>
    </location>
</feature>
<feature type="strand" evidence="10">
    <location>
        <begin position="157"/>
        <end position="163"/>
    </location>
</feature>
<feature type="helix" evidence="10">
    <location>
        <begin position="178"/>
        <end position="193"/>
    </location>
</feature>
<feature type="strand" evidence="10">
    <location>
        <begin position="202"/>
        <end position="207"/>
    </location>
</feature>
<feature type="helix" evidence="10">
    <location>
        <begin position="214"/>
        <end position="223"/>
    </location>
</feature>
<feature type="helix" evidence="10">
    <location>
        <begin position="240"/>
        <end position="252"/>
    </location>
</feature>
<feature type="strand" evidence="11">
    <location>
        <begin position="256"/>
        <end position="260"/>
    </location>
</feature>
<feature type="strand" evidence="10">
    <location>
        <begin position="269"/>
        <end position="271"/>
    </location>
</feature>
<feature type="helix" evidence="10">
    <location>
        <begin position="276"/>
        <end position="286"/>
    </location>
</feature>
<feature type="strand" evidence="10">
    <location>
        <begin position="291"/>
        <end position="294"/>
    </location>
</feature>
<feature type="helix" evidence="10">
    <location>
        <begin position="307"/>
        <end position="325"/>
    </location>
</feature>
<feature type="strand" evidence="10">
    <location>
        <begin position="334"/>
        <end position="339"/>
    </location>
</feature>
<feature type="strand" evidence="10">
    <location>
        <begin position="342"/>
        <end position="347"/>
    </location>
</feature>
<feature type="helix" evidence="10">
    <location>
        <begin position="348"/>
        <end position="363"/>
    </location>
</feature>
<feature type="helix" evidence="10">
    <location>
        <begin position="367"/>
        <end position="374"/>
    </location>
</feature>
<feature type="helix" evidence="10">
    <location>
        <begin position="377"/>
        <end position="389"/>
    </location>
</feature>
<feature type="strand" evidence="10">
    <location>
        <begin position="402"/>
        <end position="410"/>
    </location>
</feature>
<feature type="helix" evidence="10">
    <location>
        <begin position="415"/>
        <end position="428"/>
    </location>
</feature>
<feature type="strand" evidence="10">
    <location>
        <begin position="432"/>
        <end position="438"/>
    </location>
</feature>
<feature type="helix" evidence="10">
    <location>
        <begin position="441"/>
        <end position="445"/>
    </location>
</feature>
<feature type="strand" evidence="10">
    <location>
        <begin position="448"/>
        <end position="450"/>
    </location>
</feature>
<feature type="turn" evidence="10">
    <location>
        <begin position="453"/>
        <end position="456"/>
    </location>
</feature>
<feature type="helix" evidence="10">
    <location>
        <begin position="475"/>
        <end position="477"/>
    </location>
</feature>
<feature type="helix" evidence="10">
    <location>
        <begin position="478"/>
        <end position="487"/>
    </location>
</feature>
<feature type="strand" evidence="10">
    <location>
        <begin position="493"/>
        <end position="498"/>
    </location>
</feature>
<feature type="helix" evidence="10">
    <location>
        <begin position="499"/>
        <end position="514"/>
    </location>
</feature>
<feature type="strand" evidence="10">
    <location>
        <begin position="522"/>
        <end position="527"/>
    </location>
</feature>
<feature type="helix" evidence="10">
    <location>
        <begin position="542"/>
        <end position="556"/>
    </location>
</feature>
<feature type="turn" evidence="10">
    <location>
        <begin position="557"/>
        <end position="560"/>
    </location>
</feature>
<feature type="strand" evidence="10">
    <location>
        <begin position="562"/>
        <end position="564"/>
    </location>
</feature>
<feature type="strand" evidence="10">
    <location>
        <begin position="566"/>
        <end position="572"/>
    </location>
</feature>
<feature type="helix" evidence="10">
    <location>
        <begin position="579"/>
        <end position="587"/>
    </location>
</feature>
<feature type="strand" evidence="10">
    <location>
        <begin position="591"/>
        <end position="594"/>
    </location>
</feature>
<feature type="strand" evidence="10">
    <location>
        <begin position="596"/>
        <end position="598"/>
    </location>
</feature>
<feature type="helix" evidence="10">
    <location>
        <begin position="602"/>
        <end position="616"/>
    </location>
</feature>
<feature type="strand" evidence="10">
    <location>
        <begin position="621"/>
        <end position="628"/>
    </location>
</feature>
<feature type="strand" evidence="10">
    <location>
        <begin position="633"/>
        <end position="635"/>
    </location>
</feature>
<feature type="helix" evidence="10">
    <location>
        <begin position="637"/>
        <end position="647"/>
    </location>
</feature>
<feature type="turn" evidence="10">
    <location>
        <begin position="648"/>
        <end position="651"/>
    </location>
</feature>
<feature type="strand" evidence="10">
    <location>
        <begin position="653"/>
        <end position="658"/>
    </location>
</feature>
<feature type="helix" evidence="10">
    <location>
        <begin position="670"/>
        <end position="692"/>
    </location>
</feature>
<feature type="strand" evidence="10">
    <location>
        <begin position="697"/>
        <end position="700"/>
    </location>
</feature>
<feature type="strand" evidence="10">
    <location>
        <begin position="708"/>
        <end position="714"/>
    </location>
</feature>
<feature type="strand" evidence="10">
    <location>
        <begin position="717"/>
        <end position="722"/>
    </location>
</feature>
<feature type="helix" evidence="10">
    <location>
        <begin position="723"/>
        <end position="726"/>
    </location>
</feature>
<feature type="helix" evidence="10">
    <location>
        <begin position="727"/>
        <end position="729"/>
    </location>
</feature>
<feature type="turn" evidence="10">
    <location>
        <begin position="732"/>
        <end position="735"/>
    </location>
</feature>
<feature type="strand" evidence="10">
    <location>
        <begin position="736"/>
        <end position="739"/>
    </location>
</feature>
<feature type="helix" evidence="10">
    <location>
        <begin position="741"/>
        <end position="744"/>
    </location>
</feature>
<feature type="helix" evidence="10">
    <location>
        <begin position="746"/>
        <end position="751"/>
    </location>
</feature>
<feature type="turn" evidence="11">
    <location>
        <begin position="752"/>
        <end position="754"/>
    </location>
</feature>
<proteinExistence type="evidence at protein level"/>
<name>PFKAM_RABIT</name>
<accession>P00511</accession>
<organism>
    <name type="scientific">Oryctolagus cuniculus</name>
    <name type="common">Rabbit</name>
    <dbReference type="NCBI Taxonomy" id="9986"/>
    <lineage>
        <taxon>Eukaryota</taxon>
        <taxon>Metazoa</taxon>
        <taxon>Chordata</taxon>
        <taxon>Craniata</taxon>
        <taxon>Vertebrata</taxon>
        <taxon>Euteleostomi</taxon>
        <taxon>Mammalia</taxon>
        <taxon>Eutheria</taxon>
        <taxon>Euarchontoglires</taxon>
        <taxon>Glires</taxon>
        <taxon>Lagomorpha</taxon>
        <taxon>Leporidae</taxon>
        <taxon>Oryctolagus</taxon>
    </lineage>
</organism>
<protein>
    <recommendedName>
        <fullName evidence="5">ATP-dependent 6-phosphofructokinase, muscle type</fullName>
        <shortName evidence="5">ATP-PFK</shortName>
        <shortName>PFK-M</shortName>
        <ecNumber evidence="5">2.7.1.11</ecNumber>
    </recommendedName>
    <alternativeName>
        <fullName>6-phosphofructokinase type A</fullName>
    </alternativeName>
    <alternativeName>
        <fullName>Phosphofructo-1-kinase isozyme A</fullName>
        <shortName>PFK-A</shortName>
    </alternativeName>
    <alternativeName>
        <fullName evidence="5">Phosphohexokinase</fullName>
    </alternativeName>
</protein>
<evidence type="ECO:0000250" key="1"/>
<evidence type="ECO:0000250" key="2">
    <source>
        <dbReference type="UniProtKB" id="P08237"/>
    </source>
</evidence>
<evidence type="ECO:0000250" key="3">
    <source>
        <dbReference type="UniProtKB" id="P47857"/>
    </source>
</evidence>
<evidence type="ECO:0000250" key="4">
    <source>
        <dbReference type="UniProtKB" id="P47858"/>
    </source>
</evidence>
<evidence type="ECO:0000255" key="5">
    <source>
        <dbReference type="HAMAP-Rule" id="MF_03184"/>
    </source>
</evidence>
<evidence type="ECO:0000269" key="6">
    <source>
    </source>
</evidence>
<evidence type="ECO:0000269" key="7">
    <source>
    </source>
</evidence>
<evidence type="ECO:0000305" key="8"/>
<evidence type="ECO:0000305" key="9">
    <source>
    </source>
</evidence>
<evidence type="ECO:0007829" key="10">
    <source>
        <dbReference type="PDB" id="3O8L"/>
    </source>
</evidence>
<evidence type="ECO:0007829" key="11">
    <source>
        <dbReference type="PDB" id="3O8N"/>
    </source>
</evidence>
<gene>
    <name type="primary">PFKM</name>
</gene>
<dbReference type="EC" id="2.7.1.11" evidence="5"/>
<dbReference type="EMBL" id="M14477">
    <property type="protein sequence ID" value="AAA31441.1"/>
    <property type="molecule type" value="Genomic_DNA"/>
</dbReference>
<dbReference type="EMBL" id="M14456">
    <property type="protein sequence ID" value="AAA31441.1"/>
    <property type="status" value="JOINED"/>
    <property type="molecule type" value="Genomic_DNA"/>
</dbReference>
<dbReference type="EMBL" id="M14457">
    <property type="protein sequence ID" value="AAA31441.1"/>
    <property type="status" value="JOINED"/>
    <property type="molecule type" value="Genomic_DNA"/>
</dbReference>
<dbReference type="EMBL" id="M14458">
    <property type="protein sequence ID" value="AAA31441.1"/>
    <property type="status" value="JOINED"/>
    <property type="molecule type" value="Genomic_DNA"/>
</dbReference>
<dbReference type="EMBL" id="M14459">
    <property type="protein sequence ID" value="AAA31441.1"/>
    <property type="status" value="JOINED"/>
    <property type="molecule type" value="Genomic_DNA"/>
</dbReference>
<dbReference type="EMBL" id="M14460">
    <property type="protein sequence ID" value="AAA31441.1"/>
    <property type="status" value="JOINED"/>
    <property type="molecule type" value="Genomic_DNA"/>
</dbReference>
<dbReference type="EMBL" id="M14461">
    <property type="protein sequence ID" value="AAA31441.1"/>
    <property type="status" value="JOINED"/>
    <property type="molecule type" value="Genomic_DNA"/>
</dbReference>
<dbReference type="EMBL" id="M14462">
    <property type="protein sequence ID" value="AAA31441.1"/>
    <property type="status" value="JOINED"/>
    <property type="molecule type" value="Genomic_DNA"/>
</dbReference>
<dbReference type="EMBL" id="M14463">
    <property type="protein sequence ID" value="AAA31441.1"/>
    <property type="status" value="JOINED"/>
    <property type="molecule type" value="Genomic_DNA"/>
</dbReference>
<dbReference type="EMBL" id="M14464">
    <property type="protein sequence ID" value="AAA31441.1"/>
    <property type="status" value="JOINED"/>
    <property type="molecule type" value="Genomic_DNA"/>
</dbReference>
<dbReference type="EMBL" id="M14465">
    <property type="protein sequence ID" value="AAA31441.1"/>
    <property type="status" value="JOINED"/>
    <property type="molecule type" value="Genomic_DNA"/>
</dbReference>
<dbReference type="EMBL" id="M14466">
    <property type="protein sequence ID" value="AAA31441.1"/>
    <property type="status" value="JOINED"/>
    <property type="molecule type" value="Genomic_DNA"/>
</dbReference>
<dbReference type="EMBL" id="M14467">
    <property type="protein sequence ID" value="AAA31441.1"/>
    <property type="status" value="JOINED"/>
    <property type="molecule type" value="Genomic_DNA"/>
</dbReference>
<dbReference type="EMBL" id="M14468">
    <property type="protein sequence ID" value="AAA31441.1"/>
    <property type="status" value="JOINED"/>
    <property type="molecule type" value="Genomic_DNA"/>
</dbReference>
<dbReference type="EMBL" id="M14469">
    <property type="protein sequence ID" value="AAA31441.1"/>
    <property type="status" value="JOINED"/>
    <property type="molecule type" value="Genomic_DNA"/>
</dbReference>
<dbReference type="EMBL" id="M14470">
    <property type="protein sequence ID" value="AAA31441.1"/>
    <property type="status" value="JOINED"/>
    <property type="molecule type" value="Genomic_DNA"/>
</dbReference>
<dbReference type="EMBL" id="M14471">
    <property type="protein sequence ID" value="AAA31441.1"/>
    <property type="status" value="JOINED"/>
    <property type="molecule type" value="Genomic_DNA"/>
</dbReference>
<dbReference type="EMBL" id="M14472">
    <property type="protein sequence ID" value="AAA31441.1"/>
    <property type="status" value="JOINED"/>
    <property type="molecule type" value="Genomic_DNA"/>
</dbReference>
<dbReference type="EMBL" id="M14473">
    <property type="protein sequence ID" value="AAA31441.1"/>
    <property type="status" value="JOINED"/>
    <property type="molecule type" value="Genomic_DNA"/>
</dbReference>
<dbReference type="EMBL" id="M14474">
    <property type="protein sequence ID" value="AAA31441.1"/>
    <property type="status" value="JOINED"/>
    <property type="molecule type" value="Genomic_DNA"/>
</dbReference>
<dbReference type="EMBL" id="M14475">
    <property type="protein sequence ID" value="AAA31441.1"/>
    <property type="status" value="JOINED"/>
    <property type="molecule type" value="Genomic_DNA"/>
</dbReference>
<dbReference type="EMBL" id="M14476">
    <property type="protein sequence ID" value="AAA31441.1"/>
    <property type="status" value="JOINED"/>
    <property type="molecule type" value="Genomic_DNA"/>
</dbReference>
<dbReference type="PIR" id="A26550">
    <property type="entry name" value="KIRBF"/>
</dbReference>
<dbReference type="PDB" id="3O8L">
    <property type="method" value="X-ray"/>
    <property type="resolution" value="3.20 A"/>
    <property type="chains" value="A/B=1-762"/>
</dbReference>
<dbReference type="PDB" id="3O8N">
    <property type="method" value="X-ray"/>
    <property type="resolution" value="3.20 A"/>
    <property type="chains" value="A/B=1-762"/>
</dbReference>
<dbReference type="PDBsum" id="3O8L"/>
<dbReference type="PDBsum" id="3O8N"/>
<dbReference type="SMR" id="P00511"/>
<dbReference type="FunCoup" id="P00511">
    <property type="interactions" value="863"/>
</dbReference>
<dbReference type="STRING" id="9986.ENSOCUP00000044857"/>
<dbReference type="ChEMBL" id="CHEMBL1075312"/>
<dbReference type="GlyCosmos" id="P00511">
    <property type="glycosylation" value="1 site, No reported glycans"/>
</dbReference>
<dbReference type="iPTMnet" id="P00511"/>
<dbReference type="PaxDb" id="9986-ENSOCUP00000014991"/>
<dbReference type="eggNOG" id="KOG2440">
    <property type="taxonomic scope" value="Eukaryota"/>
</dbReference>
<dbReference type="InParanoid" id="P00511"/>
<dbReference type="BRENDA" id="2.7.1.11">
    <property type="organism ID" value="1749"/>
</dbReference>
<dbReference type="SABIO-RK" id="P00511"/>
<dbReference type="UniPathway" id="UPA00109">
    <property type="reaction ID" value="UER00182"/>
</dbReference>
<dbReference type="EvolutionaryTrace" id="P00511"/>
<dbReference type="Proteomes" id="UP000001811">
    <property type="component" value="Unplaced"/>
</dbReference>
<dbReference type="GO" id="GO:0005945">
    <property type="term" value="C:6-phosphofructokinase complex"/>
    <property type="evidence" value="ECO:0007669"/>
    <property type="project" value="TreeGrafter"/>
</dbReference>
<dbReference type="GO" id="GO:0016020">
    <property type="term" value="C:membrane"/>
    <property type="evidence" value="ECO:0007669"/>
    <property type="project" value="TreeGrafter"/>
</dbReference>
<dbReference type="GO" id="GO:0003872">
    <property type="term" value="F:6-phosphofructokinase activity"/>
    <property type="evidence" value="ECO:0000314"/>
    <property type="project" value="UniProtKB"/>
</dbReference>
<dbReference type="GO" id="GO:0016208">
    <property type="term" value="F:AMP binding"/>
    <property type="evidence" value="ECO:0007669"/>
    <property type="project" value="TreeGrafter"/>
</dbReference>
<dbReference type="GO" id="GO:0005524">
    <property type="term" value="F:ATP binding"/>
    <property type="evidence" value="ECO:0007669"/>
    <property type="project" value="UniProtKB-KW"/>
</dbReference>
<dbReference type="GO" id="GO:0070095">
    <property type="term" value="F:fructose-6-phosphate binding"/>
    <property type="evidence" value="ECO:0007669"/>
    <property type="project" value="TreeGrafter"/>
</dbReference>
<dbReference type="GO" id="GO:0042802">
    <property type="term" value="F:identical protein binding"/>
    <property type="evidence" value="ECO:0007669"/>
    <property type="project" value="TreeGrafter"/>
</dbReference>
<dbReference type="GO" id="GO:0046872">
    <property type="term" value="F:metal ion binding"/>
    <property type="evidence" value="ECO:0007669"/>
    <property type="project" value="UniProtKB-KW"/>
</dbReference>
<dbReference type="GO" id="GO:0048029">
    <property type="term" value="F:monosaccharide binding"/>
    <property type="evidence" value="ECO:0007669"/>
    <property type="project" value="TreeGrafter"/>
</dbReference>
<dbReference type="GO" id="GO:0061621">
    <property type="term" value="P:canonical glycolysis"/>
    <property type="evidence" value="ECO:0007669"/>
    <property type="project" value="TreeGrafter"/>
</dbReference>
<dbReference type="GO" id="GO:0030388">
    <property type="term" value="P:fructose 1,6-bisphosphate metabolic process"/>
    <property type="evidence" value="ECO:0007669"/>
    <property type="project" value="TreeGrafter"/>
</dbReference>
<dbReference type="GO" id="GO:0006002">
    <property type="term" value="P:fructose 6-phosphate metabolic process"/>
    <property type="evidence" value="ECO:0007669"/>
    <property type="project" value="InterPro"/>
</dbReference>
<dbReference type="CDD" id="cd00764">
    <property type="entry name" value="Eukaryotic_PFK"/>
    <property type="match status" value="1"/>
</dbReference>
<dbReference type="FunFam" id="3.40.50.460:FF:000001">
    <property type="entry name" value="ATP-dependent 6-phosphofructokinase"/>
    <property type="match status" value="1"/>
</dbReference>
<dbReference type="FunFam" id="3.40.50.460:FF:000003">
    <property type="entry name" value="ATP-dependent 6-phosphofructokinase"/>
    <property type="match status" value="1"/>
</dbReference>
<dbReference type="FunFam" id="3.40.50.450:FF:000043">
    <property type="entry name" value="ATP-dependent 6-phosphofructokinase, platelet type"/>
    <property type="match status" value="1"/>
</dbReference>
<dbReference type="Gene3D" id="3.40.50.450">
    <property type="match status" value="2"/>
</dbReference>
<dbReference type="Gene3D" id="3.40.50.460">
    <property type="entry name" value="Phosphofructokinase domain"/>
    <property type="match status" value="2"/>
</dbReference>
<dbReference type="HAMAP" id="MF_03184">
    <property type="entry name" value="Phosphofructokinase_I_E"/>
    <property type="match status" value="1"/>
</dbReference>
<dbReference type="InterPro" id="IPR009161">
    <property type="entry name" value="6-Pfructokinase_euk"/>
</dbReference>
<dbReference type="InterPro" id="IPR022953">
    <property type="entry name" value="ATP_PFK"/>
</dbReference>
<dbReference type="InterPro" id="IPR041914">
    <property type="entry name" value="PFK_vert-type"/>
</dbReference>
<dbReference type="InterPro" id="IPR015912">
    <property type="entry name" value="Phosphofructokinase_CS"/>
</dbReference>
<dbReference type="InterPro" id="IPR000023">
    <property type="entry name" value="Phosphofructokinase_dom"/>
</dbReference>
<dbReference type="InterPro" id="IPR035966">
    <property type="entry name" value="PKF_sf"/>
</dbReference>
<dbReference type="NCBIfam" id="TIGR02478">
    <property type="entry name" value="6PF1K_euk"/>
    <property type="match status" value="1"/>
</dbReference>
<dbReference type="PANTHER" id="PTHR13697:SF59">
    <property type="entry name" value="ATP-DEPENDENT 6-PHOSPHOFRUCTOKINASE, MUSCLE TYPE"/>
    <property type="match status" value="1"/>
</dbReference>
<dbReference type="PANTHER" id="PTHR13697">
    <property type="entry name" value="PHOSPHOFRUCTOKINASE"/>
    <property type="match status" value="1"/>
</dbReference>
<dbReference type="Pfam" id="PF00365">
    <property type="entry name" value="PFK"/>
    <property type="match status" value="2"/>
</dbReference>
<dbReference type="PIRSF" id="PIRSF000533">
    <property type="entry name" value="ATP_PFK_euk"/>
    <property type="match status" value="1"/>
</dbReference>
<dbReference type="PRINTS" id="PR00476">
    <property type="entry name" value="PHFRCTKINASE"/>
</dbReference>
<dbReference type="SUPFAM" id="SSF53784">
    <property type="entry name" value="Phosphofructokinase"/>
    <property type="match status" value="2"/>
</dbReference>
<dbReference type="PROSITE" id="PS00433">
    <property type="entry name" value="PHOSPHOFRUCTOKINASE"/>
    <property type="match status" value="2"/>
</dbReference>